<proteinExistence type="evidence at transcript level"/>
<protein>
    <recommendedName>
        <fullName evidence="4">Antimicrobial peptide UyCT5</fullName>
        <shortName evidence="4">CT5</shortName>
    </recommendedName>
    <alternativeName>
        <fullName evidence="6">Non-disulfide-bridged peptide 4.18</fullName>
        <shortName evidence="6">NDBP-4.18</shortName>
    </alternativeName>
    <alternativeName>
        <fullName evidence="5">Non-disulfide-bridged peptide 5.20</fullName>
        <shortName evidence="5">NDBP-5.20</shortName>
    </alternativeName>
</protein>
<feature type="signal peptide" evidence="2">
    <location>
        <begin position="1"/>
        <end position="23"/>
    </location>
</feature>
<feature type="peptide" id="PRO_5001091933" description="Antimicrobial peptide UyCT5">
    <location>
        <begin position="24"/>
        <end position="36"/>
    </location>
</feature>
<feature type="propeptide" id="PRO_5001091934" evidence="2">
    <location>
        <begin position="40"/>
        <end position="68"/>
    </location>
</feature>
<feature type="modified residue" description="Leucine amide" evidence="1">
    <location>
        <position position="36"/>
    </location>
</feature>
<name>NDB4I_UROYA</name>
<organism>
    <name type="scientific">Urodacus yaschenkoi</name>
    <name type="common">Inland robust scorpion</name>
    <dbReference type="NCBI Taxonomy" id="1273102"/>
    <lineage>
        <taxon>Eukaryota</taxon>
        <taxon>Metazoa</taxon>
        <taxon>Ecdysozoa</taxon>
        <taxon>Arthropoda</taxon>
        <taxon>Chelicerata</taxon>
        <taxon>Arachnida</taxon>
        <taxon>Scorpiones</taxon>
        <taxon>Iurida</taxon>
        <taxon>Scorpionoidea</taxon>
        <taxon>Scorpionidae</taxon>
        <taxon>Urodacinae</taxon>
        <taxon>Urodacus</taxon>
    </lineage>
</organism>
<reference key="1">
    <citation type="journal article" date="2013" name="Toxicon">
        <title>Characterization of the venom from the Australian scorpion Urodacus yaschenkoi: molecular mass analysis of components, cDNA sequences and peptides with antimicrobial activity.</title>
        <authorList>
            <person name="Luna-Ramirez K."/>
            <person name="Quintero-Hernandez V."/>
            <person name="Vargas-Jaimes L."/>
            <person name="Batista C.V."/>
            <person name="Winkel K.D."/>
            <person name="Possani L.D."/>
        </authorList>
    </citation>
    <scope>NUCLEOTIDE SEQUENCE [MRNA]</scope>
    <scope>SYNTHESIS OF 24-36</scope>
    <scope>FUNCTION</scope>
    <source>
        <tissue>Venom gland</tissue>
    </source>
</reference>
<reference key="2">
    <citation type="journal article" date="2013" name="Peptides">
        <title>Three new antimicrobial peptides from the scorpion Pandinus imperator.</title>
        <authorList>
            <person name="Zeng X.C."/>
            <person name="Zhou L."/>
            <person name="Shi W."/>
            <person name="Luo X."/>
            <person name="Zhang L."/>
            <person name="Nie Y."/>
            <person name="Wang J."/>
            <person name="Wu S."/>
            <person name="Cao B."/>
            <person name="Cao H."/>
        </authorList>
    </citation>
    <scope>NOMENCLATURE</scope>
</reference>
<reference key="3">
    <citation type="journal article" date="2014" name="Peptides">
        <title>Scorpion venom peptides with no disulfide bridges: a review.</title>
        <authorList>
            <person name="Almaaytah A."/>
            <person name="Albalas Q."/>
        </authorList>
    </citation>
    <scope>NOMENCLATURE</scope>
</reference>
<accession>L0GAZ8</accession>
<keyword id="KW-0027">Amidation</keyword>
<keyword id="KW-0044">Antibiotic</keyword>
<keyword id="KW-0929">Antimicrobial</keyword>
<keyword id="KW-0165">Cleavage on pair of basic residues</keyword>
<keyword id="KW-0204">Cytolysis</keyword>
<keyword id="KW-0354">Hemolysis</keyword>
<keyword id="KW-0472">Membrane</keyword>
<keyword id="KW-0964">Secreted</keyword>
<keyword id="KW-0732">Signal</keyword>
<keyword id="KW-1052">Target cell membrane</keyword>
<keyword id="KW-1053">Target membrane</keyword>
<keyword id="KW-0812">Transmembrane</keyword>
<sequence length="68" mass="7666">MKNQFAILLLAVVFLQLISQSDAIWSAIWSGIKGLLGKRGLKNADRLDELFDGDISDADLDFLRELMR</sequence>
<evidence type="ECO:0000250" key="1"/>
<evidence type="ECO:0000255" key="2"/>
<evidence type="ECO:0000269" key="3">
    <source>
    </source>
</evidence>
<evidence type="ECO:0000303" key="4">
    <source>
    </source>
</evidence>
<evidence type="ECO:0000303" key="5">
    <source>
    </source>
</evidence>
<evidence type="ECO:0000303" key="6">
    <source>
    </source>
</evidence>
<evidence type="ECO:0000305" key="7"/>
<dbReference type="EMBL" id="JX274242">
    <property type="protein sequence ID" value="AGA82756.1"/>
    <property type="molecule type" value="mRNA"/>
</dbReference>
<dbReference type="SMR" id="L0GAZ8"/>
<dbReference type="GO" id="GO:0005576">
    <property type="term" value="C:extracellular region"/>
    <property type="evidence" value="ECO:0007669"/>
    <property type="project" value="UniProtKB-SubCell"/>
</dbReference>
<dbReference type="GO" id="GO:0016020">
    <property type="term" value="C:membrane"/>
    <property type="evidence" value="ECO:0007669"/>
    <property type="project" value="UniProtKB-KW"/>
</dbReference>
<dbReference type="GO" id="GO:0044218">
    <property type="term" value="C:other organism cell membrane"/>
    <property type="evidence" value="ECO:0007669"/>
    <property type="project" value="UniProtKB-KW"/>
</dbReference>
<dbReference type="GO" id="GO:0042742">
    <property type="term" value="P:defense response to bacterium"/>
    <property type="evidence" value="ECO:0007669"/>
    <property type="project" value="UniProtKB-KW"/>
</dbReference>
<dbReference type="GO" id="GO:0031640">
    <property type="term" value="P:killing of cells of another organism"/>
    <property type="evidence" value="ECO:0007669"/>
    <property type="project" value="UniProtKB-KW"/>
</dbReference>
<comment type="function">
    <text evidence="3">Antimicrobial peptide that inhibits the growth of Gram-positive (S.aureus, MIC=1 uM) and Gram-negative bacteria (E.coli, MIC=15 uM and P.aeruginosa, MIC=2 uM). It also shows 37% of hemolysis when 15 uM are tested (93% at 50 uM).</text>
</comment>
<comment type="subcellular location">
    <subcellularLocation>
        <location evidence="1">Secreted</location>
    </subcellularLocation>
    <subcellularLocation>
        <location evidence="1">Target cell membrane</location>
    </subcellularLocation>
    <text evidence="1">Forms a helical membrane channel in the prey.</text>
</comment>
<comment type="tissue specificity">
    <text>Expressed by the venom gland.</text>
</comment>
<comment type="similarity">
    <text evidence="7">Belongs to the non-disulfide-bridged peptide (NDBP) superfamily. Short antimicrobial peptide (group 4) family.</text>
</comment>